<evidence type="ECO:0000269" key="1">
    <source>
    </source>
</evidence>
<evidence type="ECO:0000303" key="2">
    <source>
    </source>
</evidence>
<evidence type="ECO:0000305" key="3"/>
<dbReference type="SMR" id="P84706"/>
<dbReference type="ConoServer" id="1498">
    <property type="toxin name" value="FlfXIVB"/>
</dbReference>
<dbReference type="GO" id="GO:0005576">
    <property type="term" value="C:extracellular region"/>
    <property type="evidence" value="ECO:0007669"/>
    <property type="project" value="UniProtKB-SubCell"/>
</dbReference>
<dbReference type="GO" id="GO:0090729">
    <property type="term" value="F:toxin activity"/>
    <property type="evidence" value="ECO:0007669"/>
    <property type="project" value="UniProtKB-KW"/>
</dbReference>
<name>CLEB_CONAW</name>
<accession>P84706</accession>
<sequence>WDVNDCIHFCLIGVVGRSYTECHTMCT</sequence>
<organism>
    <name type="scientific">Conus anabathrum floridanus</name>
    <name type="common">Florida cone</name>
    <name type="synonym">Conus floridanus floridensis</name>
    <dbReference type="NCBI Taxonomy" id="1520082"/>
    <lineage>
        <taxon>Eukaryota</taxon>
        <taxon>Metazoa</taxon>
        <taxon>Spiralia</taxon>
        <taxon>Lophotrochozoa</taxon>
        <taxon>Mollusca</taxon>
        <taxon>Gastropoda</taxon>
        <taxon>Caenogastropoda</taxon>
        <taxon>Neogastropoda</taxon>
        <taxon>Conoidea</taxon>
        <taxon>Conidae</taxon>
        <taxon>Conus</taxon>
        <taxon>Dauciconus</taxon>
    </lineage>
</organism>
<proteinExistence type="evidence at protein level"/>
<feature type="peptide" id="PRO_0000044516" description="Conotoxin flf14b" evidence="1">
    <location>
        <begin position="1"/>
        <end position="27"/>
    </location>
</feature>
<feature type="disulfide bond" evidence="1">
    <location>
        <begin position="6"/>
        <end position="26"/>
    </location>
</feature>
<feature type="disulfide bond" evidence="1">
    <location>
        <begin position="10"/>
        <end position="22"/>
    </location>
</feature>
<comment type="subcellular location">
    <subcellularLocation>
        <location evidence="1">Secreted</location>
    </subcellularLocation>
</comment>
<comment type="tissue specificity">
    <text evidence="3">Expressed by the venom duct.</text>
</comment>
<comment type="domain">
    <text>The cysteine framework is XIV (C-C-C-C).</text>
</comment>
<comment type="mass spectrometry"/>
<comment type="similarity">
    <text evidence="3">Belongs to the conotoxin R superfamily.</text>
</comment>
<protein>
    <recommendedName>
        <fullName evidence="2">Conotoxin flf14b</fullName>
    </recommendedName>
</protein>
<reference key="1">
    <citation type="journal article" date="2005" name="Biochemistry">
        <title>A novel conotoxin framework with a helix-loop-helix (Cs alpha/alpha) fold.</title>
        <authorList>
            <person name="Moller C."/>
            <person name="Rahmankhah S."/>
            <person name="Lauer-Fields J."/>
            <person name="Bubis J."/>
            <person name="Fields G.B."/>
            <person name="Mari F."/>
        </authorList>
    </citation>
    <scope>PROTEIN SEQUENCE</scope>
    <scope>SUBCELLULAR LOCATION</scope>
    <scope>MASS SPECTROMETRY</scope>
    <scope>DISULFIDE BONDS</scope>
    <source>
        <tissue>Venom</tissue>
    </source>
</reference>
<keyword id="KW-0903">Direct protein sequencing</keyword>
<keyword id="KW-1015">Disulfide bond</keyword>
<keyword id="KW-0964">Secreted</keyword>
<keyword id="KW-0800">Toxin</keyword>